<gene>
    <name evidence="2" type="primary">N</name>
    <name type="ORF">6</name>
</gene>
<evidence type="ECO:0000250" key="1">
    <source>
        <dbReference type="UniProtKB" id="P0DTC9"/>
    </source>
</evidence>
<evidence type="ECO:0000255" key="2">
    <source>
        <dbReference type="HAMAP-Rule" id="MF_04096"/>
    </source>
</evidence>
<evidence type="ECO:0000255" key="3">
    <source>
        <dbReference type="PROSITE-ProRule" id="PRU01276"/>
    </source>
</evidence>
<evidence type="ECO:0000255" key="4">
    <source>
        <dbReference type="PROSITE-ProRule" id="PRU01277"/>
    </source>
</evidence>
<evidence type="ECO:0000256" key="5">
    <source>
        <dbReference type="SAM" id="MobiDB-lite"/>
    </source>
</evidence>
<organism>
    <name type="scientific">Bat coronavirus HKU4</name>
    <name type="common">BtCoV</name>
    <name type="synonym">BtCoV/HKU4/2004</name>
    <dbReference type="NCBI Taxonomy" id="694007"/>
    <lineage>
        <taxon>Viruses</taxon>
        <taxon>Riboviria</taxon>
        <taxon>Orthornavirae</taxon>
        <taxon>Pisuviricota</taxon>
        <taxon>Pisoniviricetes</taxon>
        <taxon>Nidovirales</taxon>
        <taxon>Cornidovirineae</taxon>
        <taxon>Coronaviridae</taxon>
        <taxon>Orthocoronavirinae</taxon>
        <taxon>Betacoronavirus</taxon>
        <taxon>Merbecovirus</taxon>
    </lineage>
</organism>
<dbReference type="EMBL" id="EF065505">
    <property type="protein sequence ID" value="ABN10846.1"/>
    <property type="molecule type" value="Genomic_RNA"/>
</dbReference>
<dbReference type="RefSeq" id="YP_001039960.1">
    <property type="nucleotide sequence ID" value="NC_009019.1"/>
</dbReference>
<dbReference type="SMR" id="A3EXA1"/>
<dbReference type="GeneID" id="4835993"/>
<dbReference type="KEGG" id="vg:4835993"/>
<dbReference type="OrthoDB" id="3036at10239"/>
<dbReference type="Proteomes" id="UP000006574">
    <property type="component" value="Genome"/>
</dbReference>
<dbReference type="GO" id="GO:0044172">
    <property type="term" value="C:host cell endoplasmic reticulum-Golgi intermediate compartment"/>
    <property type="evidence" value="ECO:0007669"/>
    <property type="project" value="UniProtKB-SubCell"/>
</dbReference>
<dbReference type="GO" id="GO:0044177">
    <property type="term" value="C:host cell Golgi apparatus"/>
    <property type="evidence" value="ECO:0007669"/>
    <property type="project" value="UniProtKB-SubCell"/>
</dbReference>
<dbReference type="GO" id="GO:1990904">
    <property type="term" value="C:ribonucleoprotein complex"/>
    <property type="evidence" value="ECO:0007669"/>
    <property type="project" value="UniProtKB-KW"/>
</dbReference>
<dbReference type="GO" id="GO:0019013">
    <property type="term" value="C:viral nucleocapsid"/>
    <property type="evidence" value="ECO:0007669"/>
    <property type="project" value="UniProtKB-UniRule"/>
</dbReference>
<dbReference type="GO" id="GO:0003723">
    <property type="term" value="F:RNA binding"/>
    <property type="evidence" value="ECO:0007669"/>
    <property type="project" value="UniProtKB-UniRule"/>
</dbReference>
<dbReference type="CDD" id="cd21595">
    <property type="entry name" value="CoV_N-CTD"/>
    <property type="match status" value="1"/>
</dbReference>
<dbReference type="CDD" id="cd21554">
    <property type="entry name" value="CoV_N-NTD"/>
    <property type="match status" value="1"/>
</dbReference>
<dbReference type="HAMAP" id="MF_04096">
    <property type="entry name" value="BETA_CORONA_NCAP"/>
    <property type="match status" value="1"/>
</dbReference>
<dbReference type="InterPro" id="IPR044344">
    <property type="entry name" value="N_prot_C_CoV"/>
</dbReference>
<dbReference type="InterPro" id="IPR044345">
    <property type="entry name" value="N_prot_N_CoV"/>
</dbReference>
<dbReference type="InterPro" id="IPR043505">
    <property type="entry name" value="NCAP_bCoV"/>
</dbReference>
<dbReference type="InterPro" id="IPR001218">
    <property type="entry name" value="Nucleocap_CoV"/>
</dbReference>
<dbReference type="InterPro" id="IPR037179">
    <property type="entry name" value="Nucleocapsid_C"/>
</dbReference>
<dbReference type="InterPro" id="IPR037195">
    <property type="entry name" value="Nucleocapsid_N"/>
</dbReference>
<dbReference type="Pfam" id="PF00937">
    <property type="entry name" value="CoV_nucleocap"/>
    <property type="match status" value="1"/>
</dbReference>
<dbReference type="PIRSF" id="PIRSF003888">
    <property type="entry name" value="Corona_nucleocap"/>
    <property type="match status" value="1"/>
</dbReference>
<dbReference type="SUPFAM" id="SSF110304">
    <property type="entry name" value="Coronavirus RNA-binding domain"/>
    <property type="match status" value="1"/>
</dbReference>
<dbReference type="SUPFAM" id="SSF103068">
    <property type="entry name" value="Nucleocapsid protein dimerization domain"/>
    <property type="match status" value="1"/>
</dbReference>
<dbReference type="PROSITE" id="PS51929">
    <property type="entry name" value="COV_N_CTD"/>
    <property type="match status" value="1"/>
</dbReference>
<dbReference type="PROSITE" id="PS51928">
    <property type="entry name" value="COV_N_NTD"/>
    <property type="match status" value="1"/>
</dbReference>
<organismHost>
    <name type="scientific">Tylonycteris pachypus</name>
    <name type="common">Lesser bamboo bat</name>
    <name type="synonym">Vespertilio pachypus</name>
    <dbReference type="NCBI Taxonomy" id="258959"/>
</organismHost>
<protein>
    <recommendedName>
        <fullName evidence="2">Nucleoprotein</fullName>
    </recommendedName>
    <alternativeName>
        <fullName evidence="2">Nucleocapsid protein</fullName>
        <shortName evidence="2">NC</shortName>
        <shortName evidence="2">Protein N</shortName>
    </alternativeName>
</protein>
<accession>A3EXA1</accession>
<sequence length="423" mass="45868">MATPAAPRTISFADNNDNQPNQQQRGRGRNPKPRPAPNNTVSWYTGLTQHGKNPLAFPPGQGVPLNANSTTAQNAGYWRRQDRKINTGNGVKQLAPRWFFYYTGTGPEANLPFRSVKDGIVWVYEEGATDAPSVFGTRNPANDAAIVCQFAPGTLIPKNFHIEGTGGNSQSSSRASSNSRNSSRSSSRGGRSTSNSRGTSPVSHGVGSAESLAALPLLLDLQKRLADLESGKSKQPKVVTKKDAAAAKNKMRHKRVATKGFNVTQAFGLRGPGPLQGNFGDMNYNKFGTEDPRWPQMAELAPSASAFMSMSQFKLTHQSNDDKGDPIYFLSYSGAIKLDPKNPNYKKWLELLESNIDAYKTFPKKERKPKTTEDGAVASSSASQMEDVDAKPQRKPKSRVAGSITMRSGSLPALQDVTFDSEA</sequence>
<name>NCAP_BCHK4</name>
<comment type="function">
    <text evidence="2">Packages the positive strand viral genome RNA into a helical ribonucleocapsid (RNP) and plays a fundamental role during virion assembly through its interactions with the viral genome and membrane protein M. Plays an important role in enhancing the efficiency of subgenomic viral RNA transcription as well as viral replication.</text>
</comment>
<comment type="subunit">
    <text evidence="2">Homooligomer. Both monomeric and oligomeric forms interact with RNA. Interacts with protein M. Interacts with NSP3; this interaction serves to tether the genome to the newly translated replicase-transcriptase complex at a very early stage of infection.</text>
</comment>
<comment type="subcellular location">
    <subcellularLocation>
        <location evidence="2">Virion</location>
    </subcellularLocation>
    <subcellularLocation>
        <location evidence="2">Host endoplasmic reticulum-Golgi intermediate compartment</location>
    </subcellularLocation>
    <subcellularLocation>
        <location evidence="2">Host Golgi apparatus</location>
    </subcellularLocation>
    <text evidence="2">Located inside the virion, complexed with the viral RNA. Probably associates with ER-derived membranes where it participates in viral RNA synthesis and virus budding.</text>
</comment>
<comment type="PTM">
    <text evidence="2">ADP-ribosylated. The ADP-ribosylation is retained in the virion during infection.</text>
</comment>
<comment type="PTM">
    <text evidence="2">Phosphorylated on serine and threonine residues.</text>
</comment>
<comment type="similarity">
    <text evidence="2">Belongs to the betacoronavirus nucleocapsid protein family.</text>
</comment>
<keyword id="KW-0013">ADP-ribosylation</keyword>
<keyword id="KW-1040">Host Golgi apparatus</keyword>
<keyword id="KW-0597">Phosphoprotein</keyword>
<keyword id="KW-1185">Reference proteome</keyword>
<keyword id="KW-0687">Ribonucleoprotein</keyword>
<keyword id="KW-0694">RNA-binding</keyword>
<keyword id="KW-0804">Transcription</keyword>
<keyword id="KW-0805">Transcription regulation</keyword>
<keyword id="KW-0543">Viral nucleoprotein</keyword>
<keyword id="KW-0946">Virion</keyword>
<feature type="chain" id="PRO_0000290259" description="Nucleoprotein">
    <location>
        <begin position="1"/>
        <end position="423"/>
    </location>
</feature>
<feature type="domain" description="CoV N NTD" evidence="3">
    <location>
        <begin position="39"/>
        <end position="164"/>
    </location>
</feature>
<feature type="domain" description="CoV N CTD" evidence="4">
    <location>
        <begin position="240"/>
        <end position="363"/>
    </location>
</feature>
<feature type="region of interest" description="Disordered" evidence="5">
    <location>
        <begin position="1"/>
        <end position="41"/>
    </location>
</feature>
<feature type="region of interest" description="RNA-binding" evidence="2">
    <location>
        <begin position="33"/>
        <end position="175"/>
    </location>
</feature>
<feature type="region of interest" description="Disordered" evidence="5">
    <location>
        <begin position="159"/>
        <end position="207"/>
    </location>
</feature>
<feature type="region of interest" description="Disordered" evidence="5">
    <location>
        <begin position="230"/>
        <end position="252"/>
    </location>
</feature>
<feature type="region of interest" description="Dimerization" evidence="2">
    <location>
        <begin position="251"/>
        <end position="360"/>
    </location>
</feature>
<feature type="region of interest" description="Disordered" evidence="5">
    <location>
        <begin position="363"/>
        <end position="407"/>
    </location>
</feature>
<feature type="compositionally biased region" description="Low complexity" evidence="5">
    <location>
        <begin position="13"/>
        <end position="25"/>
    </location>
</feature>
<feature type="compositionally biased region" description="Low complexity" evidence="5">
    <location>
        <begin position="168"/>
        <end position="200"/>
    </location>
</feature>
<feature type="binding site" evidence="1">
    <location>
        <position position="83"/>
    </location>
    <ligand>
        <name>RNA</name>
        <dbReference type="ChEBI" id="CHEBI:33697"/>
    </ligand>
</feature>
<feature type="binding site" evidence="1">
    <location>
        <position position="97"/>
    </location>
    <ligand>
        <name>RNA</name>
        <dbReference type="ChEBI" id="CHEBI:33697"/>
    </ligand>
</feature>
<feature type="binding site" evidence="1">
    <location>
        <position position="138"/>
    </location>
    <ligand>
        <name>RNA</name>
        <dbReference type="ChEBI" id="CHEBI:33697"/>
    </ligand>
</feature>
<feature type="modified residue" description="Phosphoserine; by host" evidence="2">
    <location>
        <position position="133"/>
    </location>
</feature>
<feature type="modified residue" description="Phosphothreonine; by host" evidence="2">
    <location>
        <position position="405"/>
    </location>
</feature>
<proteinExistence type="inferred from homology"/>
<reference key="1">
    <citation type="journal article" date="2007" name="J. Virol.">
        <title>Comparative analysis of twelve genomes of three novel group 2c and group 2d coronaviruses reveals unique group and subgroup features.</title>
        <authorList>
            <person name="Woo P.C.Y."/>
            <person name="Wang M."/>
            <person name="Lau S.K.P."/>
            <person name="Xu H.F."/>
            <person name="Poon R.W.S."/>
            <person name="Guo R."/>
            <person name="Wong B.H.L."/>
            <person name="Gao K."/>
            <person name="Tsoi H.-W."/>
            <person name="Huang Y."/>
            <person name="Li K.S.M."/>
            <person name="Lam C.S.F."/>
            <person name="Chan K.-H."/>
            <person name="Zheng B.-J."/>
            <person name="Yuen K.-Y."/>
        </authorList>
    </citation>
    <scope>NUCLEOTIDE SEQUENCE [GENOMIC RNA]</scope>
    <source>
        <strain>Isolate HKU4-1</strain>
    </source>
</reference>